<gene>
    <name type="primary">scamp5-b</name>
</gene>
<comment type="function">
    <text evidence="1">Required for the calcium-dependent exocytosis of signal sequence-containing cytokines. Probably acts in cooperation with the SNARE machinery (By similarity).</text>
</comment>
<comment type="subcellular location">
    <subcellularLocation>
        <location evidence="1">Cell membrane</location>
        <topology evidence="1">Multi-pass membrane protein</topology>
    </subcellularLocation>
    <subcellularLocation>
        <location evidence="1">Golgi apparatus membrane</location>
        <topology evidence="1">Multi-pass membrane protein</topology>
    </subcellularLocation>
    <subcellularLocation>
        <location evidence="1">Golgi apparatus</location>
        <location evidence="1">trans-Golgi network membrane</location>
        <topology evidence="1">Multi-pass membrane protein</topology>
    </subcellularLocation>
    <subcellularLocation>
        <location evidence="1">Recycling endosome membrane</location>
        <topology evidence="1">Multi-pass membrane protein</topology>
    </subcellularLocation>
    <subcellularLocation>
        <location evidence="1">Cytoplasmic vesicle</location>
        <location evidence="1">Secretory vesicle</location>
        <location evidence="1">Synaptic vesicle membrane</location>
        <topology evidence="1">Multi-pass membrane protein</topology>
    </subcellularLocation>
    <text evidence="1">Mainly localizes in Golgi apparatus membrane. Upon calcium-triggered exocytosis, it translocates to the cell membrane. Highly enriched in synaptic vesicles (By similarity).</text>
</comment>
<comment type="similarity">
    <text evidence="3">Belongs to the SCAMP family. SCAMP5 subfamily.</text>
</comment>
<reference key="1">
    <citation type="submission" date="2004-06" db="EMBL/GenBank/DDBJ databases">
        <authorList>
            <consortium name="NIH - Xenopus Gene Collection (XGC) project"/>
        </authorList>
    </citation>
    <scope>NUCLEOTIDE SEQUENCE [LARGE SCALE MRNA]</scope>
    <source>
        <tissue>Eye</tissue>
    </source>
</reference>
<protein>
    <recommendedName>
        <fullName>Secretory carrier-associated membrane protein 5B</fullName>
        <shortName>Secretory carrier membrane protein 5 B</shortName>
    </recommendedName>
</protein>
<dbReference type="EMBL" id="BC074243">
    <property type="protein sequence ID" value="AAH74243.1"/>
    <property type="molecule type" value="mRNA"/>
</dbReference>
<dbReference type="SMR" id="Q6GM42"/>
<dbReference type="DNASU" id="444565"/>
<dbReference type="GeneID" id="444565"/>
<dbReference type="KEGG" id="xla:444565"/>
<dbReference type="AGR" id="Xenbase:XB-GENE-6078622"/>
<dbReference type="CTD" id="444565"/>
<dbReference type="Xenbase" id="XB-GENE-6078622">
    <property type="gene designation" value="scamp5.2.L"/>
</dbReference>
<dbReference type="OMA" id="TWPVGWI"/>
<dbReference type="OrthoDB" id="242866at2759"/>
<dbReference type="Proteomes" id="UP000186698">
    <property type="component" value="Chromosome 3L"/>
</dbReference>
<dbReference type="Bgee" id="444565">
    <property type="expression patterns" value="Expressed in brain and 19 other cell types or tissues"/>
</dbReference>
<dbReference type="GO" id="GO:0000139">
    <property type="term" value="C:Golgi membrane"/>
    <property type="evidence" value="ECO:0000250"/>
    <property type="project" value="UniProtKB"/>
</dbReference>
<dbReference type="GO" id="GO:0005886">
    <property type="term" value="C:plasma membrane"/>
    <property type="evidence" value="ECO:0000250"/>
    <property type="project" value="UniProtKB"/>
</dbReference>
<dbReference type="GO" id="GO:0055038">
    <property type="term" value="C:recycling endosome membrane"/>
    <property type="evidence" value="ECO:0000318"/>
    <property type="project" value="GO_Central"/>
</dbReference>
<dbReference type="GO" id="GO:0030672">
    <property type="term" value="C:synaptic vesicle membrane"/>
    <property type="evidence" value="ECO:0007669"/>
    <property type="project" value="UniProtKB-SubCell"/>
</dbReference>
<dbReference type="GO" id="GO:0032588">
    <property type="term" value="C:trans-Golgi network membrane"/>
    <property type="evidence" value="ECO:0000318"/>
    <property type="project" value="GO_Central"/>
</dbReference>
<dbReference type="GO" id="GO:0006887">
    <property type="term" value="P:exocytosis"/>
    <property type="evidence" value="ECO:0007669"/>
    <property type="project" value="UniProtKB-KW"/>
</dbReference>
<dbReference type="GO" id="GO:0045956">
    <property type="term" value="P:positive regulation of calcium ion-dependent exocytosis"/>
    <property type="evidence" value="ECO:0000250"/>
    <property type="project" value="UniProtKB"/>
</dbReference>
<dbReference type="GO" id="GO:0001819">
    <property type="term" value="P:positive regulation of cytokine production"/>
    <property type="evidence" value="ECO:0000250"/>
    <property type="project" value="UniProtKB"/>
</dbReference>
<dbReference type="GO" id="GO:0015031">
    <property type="term" value="P:protein transport"/>
    <property type="evidence" value="ECO:0000318"/>
    <property type="project" value="GO_Central"/>
</dbReference>
<dbReference type="InterPro" id="IPR007273">
    <property type="entry name" value="SCAMP"/>
</dbReference>
<dbReference type="PANTHER" id="PTHR10687:SF93">
    <property type="entry name" value="SECRETORY CARRIER-ASSOCIATED MEMBRANE PROTEIN 5A"/>
    <property type="match status" value="1"/>
</dbReference>
<dbReference type="PANTHER" id="PTHR10687">
    <property type="entry name" value="SECRETORY CARRIER-ASSOCIATED MEMBRANE PROTEIN SCAMP"/>
    <property type="match status" value="1"/>
</dbReference>
<dbReference type="Pfam" id="PF04144">
    <property type="entry name" value="SCAMP"/>
    <property type="match status" value="1"/>
</dbReference>
<feature type="chain" id="PRO_0000370556" description="Secretory carrier-associated membrane protein 5B">
    <location>
        <begin position="1"/>
        <end position="235"/>
    </location>
</feature>
<feature type="topological domain" description="Cytoplasmic" evidence="2">
    <location>
        <begin position="1"/>
        <end position="39"/>
    </location>
</feature>
<feature type="transmembrane region" description="Helical" evidence="2">
    <location>
        <begin position="40"/>
        <end position="60"/>
    </location>
</feature>
<feature type="topological domain" description="Extracellular" evidence="2">
    <location>
        <begin position="61"/>
        <end position="67"/>
    </location>
</feature>
<feature type="transmembrane region" description="Helical" evidence="2">
    <location>
        <begin position="68"/>
        <end position="88"/>
    </location>
</feature>
<feature type="topological domain" description="Cytoplasmic" evidence="2">
    <location>
        <begin position="89"/>
        <end position="102"/>
    </location>
</feature>
<feature type="transmembrane region" description="Helical" evidence="2">
    <location>
        <begin position="103"/>
        <end position="125"/>
    </location>
</feature>
<feature type="topological domain" description="Extracellular" evidence="2">
    <location>
        <begin position="126"/>
        <end position="148"/>
    </location>
</feature>
<feature type="transmembrane region" description="Helical" evidence="2">
    <location>
        <begin position="149"/>
        <end position="169"/>
    </location>
</feature>
<feature type="topological domain" description="Cytoplasmic" evidence="2">
    <location>
        <begin position="170"/>
        <end position="235"/>
    </location>
</feature>
<evidence type="ECO:0000250" key="1"/>
<evidence type="ECO:0000255" key="2"/>
<evidence type="ECO:0000305" key="3"/>
<keyword id="KW-1003">Cell membrane</keyword>
<keyword id="KW-0968">Cytoplasmic vesicle</keyword>
<keyword id="KW-0967">Endosome</keyword>
<keyword id="KW-0268">Exocytosis</keyword>
<keyword id="KW-0333">Golgi apparatus</keyword>
<keyword id="KW-0472">Membrane</keyword>
<keyword id="KW-0653">Protein transport</keyword>
<keyword id="KW-1185">Reference proteome</keyword>
<keyword id="KW-0770">Synapse</keyword>
<keyword id="KW-0812">Transmembrane</keyword>
<keyword id="KW-1133">Transmembrane helix</keyword>
<keyword id="KW-0813">Transport</keyword>
<proteinExistence type="evidence at transcript level"/>
<sequence length="235" mass="26002">MSDKPNNFPPLPRFIPLKPCFYQDFDTDIPDVHRTTAKRLYYLWMLNSITLGVNLIGCLAWLIGGGGATNFGLAFLWLILFTPCSYVCWFRPIYKAFKTDSSFNFMAFFFTFTGQLVISIIQAVGIPGWGVCGWIASISFFGTNVGSAVVMLIPTIMFTAVAVLSFVALTKVHRFYRGAGGSMSKAQEEWTTGAWKNPHVQQAAQNAAFGAAQGAMTQNEPQYSATPNYGYSNQM</sequence>
<accession>Q6GM42</accession>
<organism>
    <name type="scientific">Xenopus laevis</name>
    <name type="common">African clawed frog</name>
    <dbReference type="NCBI Taxonomy" id="8355"/>
    <lineage>
        <taxon>Eukaryota</taxon>
        <taxon>Metazoa</taxon>
        <taxon>Chordata</taxon>
        <taxon>Craniata</taxon>
        <taxon>Vertebrata</taxon>
        <taxon>Euteleostomi</taxon>
        <taxon>Amphibia</taxon>
        <taxon>Batrachia</taxon>
        <taxon>Anura</taxon>
        <taxon>Pipoidea</taxon>
        <taxon>Pipidae</taxon>
        <taxon>Xenopodinae</taxon>
        <taxon>Xenopus</taxon>
        <taxon>Xenopus</taxon>
    </lineage>
</organism>
<name>SCM5B_XENLA</name>